<comment type="function">
    <text evidence="1">Required for the formation of a threonylcarbamoyl group on adenosine at position 37 (t(6)A37) in tRNAs that read codons beginning with adenine. Catalyzes the conversion of L-threonine, HCO(3)(-)/CO(2) and ATP to give threonylcarbamoyl-AMP (TC-AMP) as the acyladenylate intermediate, with the release of diphosphate.</text>
</comment>
<comment type="catalytic activity">
    <reaction evidence="1">
        <text>L-threonine + hydrogencarbonate + ATP = L-threonylcarbamoyladenylate + diphosphate + H2O</text>
        <dbReference type="Rhea" id="RHEA:36407"/>
        <dbReference type="ChEBI" id="CHEBI:15377"/>
        <dbReference type="ChEBI" id="CHEBI:17544"/>
        <dbReference type="ChEBI" id="CHEBI:30616"/>
        <dbReference type="ChEBI" id="CHEBI:33019"/>
        <dbReference type="ChEBI" id="CHEBI:57926"/>
        <dbReference type="ChEBI" id="CHEBI:73682"/>
        <dbReference type="EC" id="2.7.7.87"/>
    </reaction>
</comment>
<comment type="subcellular location">
    <subcellularLocation>
        <location evidence="1">Cytoplasm</location>
    </subcellularLocation>
</comment>
<comment type="similarity">
    <text evidence="1">Belongs to the SUA5 family. TsaC subfamily.</text>
</comment>
<reference key="1">
    <citation type="submission" date="2007-02" db="EMBL/GenBank/DDBJ databases">
        <title>Complete sequence of chromosome of Yersinia pestis Pestoides F.</title>
        <authorList>
            <consortium name="US DOE Joint Genome Institute"/>
            <person name="Copeland A."/>
            <person name="Lucas S."/>
            <person name="Lapidus A."/>
            <person name="Barry K."/>
            <person name="Detter J.C."/>
            <person name="Glavina del Rio T."/>
            <person name="Hammon N."/>
            <person name="Israni S."/>
            <person name="Dalin E."/>
            <person name="Tice H."/>
            <person name="Pitluck S."/>
            <person name="Di Bartolo G."/>
            <person name="Chain P."/>
            <person name="Malfatti S."/>
            <person name="Shin M."/>
            <person name="Vergez L."/>
            <person name="Schmutz J."/>
            <person name="Larimer F."/>
            <person name="Land M."/>
            <person name="Hauser L."/>
            <person name="Worsham P."/>
            <person name="Chu M."/>
            <person name="Bearden S."/>
            <person name="Garcia E."/>
            <person name="Richardson P."/>
        </authorList>
    </citation>
    <scope>NUCLEOTIDE SEQUENCE [LARGE SCALE GENOMIC DNA]</scope>
    <source>
        <strain>Pestoides F</strain>
    </source>
</reference>
<gene>
    <name evidence="1" type="primary">tsaC</name>
    <name type="synonym">rimN</name>
    <name type="ordered locus">YPDSF_0168</name>
</gene>
<protein>
    <recommendedName>
        <fullName evidence="1">Threonylcarbamoyl-AMP synthase</fullName>
        <shortName evidence="1">TC-AMP synthase</shortName>
        <ecNumber evidence="1">2.7.7.87</ecNumber>
    </recommendedName>
    <alternativeName>
        <fullName evidence="1">L-threonylcarbamoyladenylate synthase</fullName>
    </alternativeName>
    <alternativeName>
        <fullName evidence="1">t(6)A37 threonylcarbamoyladenosine biosynthesis protein TsaC</fullName>
    </alternativeName>
    <alternativeName>
        <fullName evidence="1">tRNA threonylcarbamoyladenosine biosynthesis protein TsaC</fullName>
    </alternativeName>
</protein>
<proteinExistence type="inferred from homology"/>
<dbReference type="EC" id="2.7.7.87" evidence="1"/>
<dbReference type="EMBL" id="CP000668">
    <property type="protein sequence ID" value="ABP38590.1"/>
    <property type="molecule type" value="Genomic_DNA"/>
</dbReference>
<dbReference type="RefSeq" id="WP_002209025.1">
    <property type="nucleotide sequence ID" value="NZ_CP009715.1"/>
</dbReference>
<dbReference type="SMR" id="A4TH27"/>
<dbReference type="GeneID" id="57974358"/>
<dbReference type="KEGG" id="ypp:YPDSF_0168"/>
<dbReference type="PATRIC" id="fig|386656.14.peg.397"/>
<dbReference type="GO" id="GO:0005737">
    <property type="term" value="C:cytoplasm"/>
    <property type="evidence" value="ECO:0007669"/>
    <property type="project" value="UniProtKB-SubCell"/>
</dbReference>
<dbReference type="GO" id="GO:0005524">
    <property type="term" value="F:ATP binding"/>
    <property type="evidence" value="ECO:0007669"/>
    <property type="project" value="UniProtKB-UniRule"/>
</dbReference>
<dbReference type="GO" id="GO:0003725">
    <property type="term" value="F:double-stranded RNA binding"/>
    <property type="evidence" value="ECO:0007669"/>
    <property type="project" value="InterPro"/>
</dbReference>
<dbReference type="GO" id="GO:0061710">
    <property type="term" value="F:L-threonylcarbamoyladenylate synthase"/>
    <property type="evidence" value="ECO:0007669"/>
    <property type="project" value="UniProtKB-EC"/>
</dbReference>
<dbReference type="GO" id="GO:0000049">
    <property type="term" value="F:tRNA binding"/>
    <property type="evidence" value="ECO:0007669"/>
    <property type="project" value="TreeGrafter"/>
</dbReference>
<dbReference type="GO" id="GO:0006450">
    <property type="term" value="P:regulation of translational fidelity"/>
    <property type="evidence" value="ECO:0007669"/>
    <property type="project" value="TreeGrafter"/>
</dbReference>
<dbReference type="GO" id="GO:0002949">
    <property type="term" value="P:tRNA threonylcarbamoyladenosine modification"/>
    <property type="evidence" value="ECO:0007669"/>
    <property type="project" value="UniProtKB-UniRule"/>
</dbReference>
<dbReference type="FunFam" id="3.90.870.10:FF:000004">
    <property type="entry name" value="Threonylcarbamoyl-AMP synthase"/>
    <property type="match status" value="1"/>
</dbReference>
<dbReference type="Gene3D" id="3.90.870.10">
    <property type="entry name" value="DHBP synthase"/>
    <property type="match status" value="1"/>
</dbReference>
<dbReference type="HAMAP" id="MF_01852">
    <property type="entry name" value="TsaC"/>
    <property type="match status" value="1"/>
</dbReference>
<dbReference type="InterPro" id="IPR017945">
    <property type="entry name" value="DHBP_synth_RibB-like_a/b_dom"/>
</dbReference>
<dbReference type="InterPro" id="IPR006070">
    <property type="entry name" value="Sua5-like_dom"/>
</dbReference>
<dbReference type="InterPro" id="IPR023535">
    <property type="entry name" value="TC-AMP_synthase"/>
</dbReference>
<dbReference type="InterPro" id="IPR050156">
    <property type="entry name" value="TC-AMP_synthase_SUA5"/>
</dbReference>
<dbReference type="NCBIfam" id="NF007919">
    <property type="entry name" value="PRK10634.1"/>
    <property type="match status" value="1"/>
</dbReference>
<dbReference type="PANTHER" id="PTHR17490">
    <property type="entry name" value="SUA5"/>
    <property type="match status" value="1"/>
</dbReference>
<dbReference type="PANTHER" id="PTHR17490:SF18">
    <property type="entry name" value="THREONYLCARBAMOYL-AMP SYNTHASE"/>
    <property type="match status" value="1"/>
</dbReference>
<dbReference type="Pfam" id="PF01300">
    <property type="entry name" value="Sua5_yciO_yrdC"/>
    <property type="match status" value="1"/>
</dbReference>
<dbReference type="SUPFAM" id="SSF55821">
    <property type="entry name" value="YrdC/RibB"/>
    <property type="match status" value="1"/>
</dbReference>
<dbReference type="PROSITE" id="PS51163">
    <property type="entry name" value="YRDC"/>
    <property type="match status" value="1"/>
</dbReference>
<feature type="chain" id="PRO_0000353023" description="Threonylcarbamoyl-AMP synthase">
    <location>
        <begin position="1"/>
        <end position="190"/>
    </location>
</feature>
<feature type="domain" description="YrdC-like" evidence="1">
    <location>
        <begin position="7"/>
        <end position="190"/>
    </location>
</feature>
<accession>A4TH27</accession>
<organism>
    <name type="scientific">Yersinia pestis (strain Pestoides F)</name>
    <dbReference type="NCBI Taxonomy" id="386656"/>
    <lineage>
        <taxon>Bacteria</taxon>
        <taxon>Pseudomonadati</taxon>
        <taxon>Pseudomonadota</taxon>
        <taxon>Gammaproteobacteria</taxon>
        <taxon>Enterobacterales</taxon>
        <taxon>Yersiniaceae</taxon>
        <taxon>Yersinia</taxon>
    </lineage>
</organism>
<evidence type="ECO:0000255" key="1">
    <source>
        <dbReference type="HAMAP-Rule" id="MF_01852"/>
    </source>
</evidence>
<sequence length="190" mass="21153">MNQQENNFVLADIVRALRQEEVIAYPTEAVFGLGCDPDSEKAVNTLLALKQRPWQKGLILVAANYAQLEPYINDSMLNEIQRETLFSTWPGPITWVIPARVETPQWLTGCFDSLAVRVSNHPLVQQLCAEYGKPLVSTSANLSGHEPCRTEEEVRIQFGPSLPVLSGHVGGRLNPSEIRDALTGKRFRQG</sequence>
<name>TSAC_YERPP</name>
<keyword id="KW-0067">ATP-binding</keyword>
<keyword id="KW-0963">Cytoplasm</keyword>
<keyword id="KW-0547">Nucleotide-binding</keyword>
<keyword id="KW-0548">Nucleotidyltransferase</keyword>
<keyword id="KW-0808">Transferase</keyword>
<keyword id="KW-0819">tRNA processing</keyword>